<protein>
    <recommendedName>
        <fullName evidence="1">Protein GrpE</fullName>
    </recommendedName>
    <alternativeName>
        <fullName evidence="1">HSP-70 cofactor</fullName>
    </alternativeName>
</protein>
<sequence length="186" mass="20702">MADEQQTLDQQTPEQPTGAAEDLTARVQELEEQLAAAQDQALRMVADLQNVRRRAEQDVEKAHKFALEKFAGDLLAVVDTLERGLEMSDPNDEAIKPMREGMELTLKMFDDTLRRYQVEALNPEGEPFNPEQHQAMAMQESASAEPGSVLKVFQKGYLLNGRLLRPAMVVVSKAPAETPPSIDEQA</sequence>
<gene>
    <name evidence="1" type="primary">grpE</name>
    <name type="ordered locus">PA4762</name>
</gene>
<proteinExistence type="inferred from homology"/>
<keyword id="KW-0143">Chaperone</keyword>
<keyword id="KW-0963">Cytoplasm</keyword>
<keyword id="KW-1185">Reference proteome</keyword>
<keyword id="KW-0346">Stress response</keyword>
<evidence type="ECO:0000255" key="1">
    <source>
        <dbReference type="HAMAP-Rule" id="MF_01151"/>
    </source>
</evidence>
<evidence type="ECO:0000256" key="2">
    <source>
        <dbReference type="SAM" id="MobiDB-lite"/>
    </source>
</evidence>
<feature type="chain" id="PRO_0000113839" description="Protein GrpE">
    <location>
        <begin position="1"/>
        <end position="186"/>
    </location>
</feature>
<feature type="region of interest" description="Disordered" evidence="2">
    <location>
        <begin position="1"/>
        <end position="20"/>
    </location>
</feature>
<feature type="compositionally biased region" description="Polar residues" evidence="2">
    <location>
        <begin position="1"/>
        <end position="15"/>
    </location>
</feature>
<comment type="function">
    <text evidence="1">Participates actively in the response to hyperosmotic and heat shock by preventing the aggregation of stress-denatured proteins, in association with DnaK and GrpE. It is the nucleotide exchange factor for DnaK and may function as a thermosensor. Unfolded proteins bind initially to DnaJ; upon interaction with the DnaJ-bound protein, DnaK hydrolyzes its bound ATP, resulting in the formation of a stable complex. GrpE releases ADP from DnaK; ATP binding to DnaK triggers the release of the substrate protein, thus completing the reaction cycle. Several rounds of ATP-dependent interactions between DnaJ, DnaK and GrpE are required for fully efficient folding.</text>
</comment>
<comment type="subunit">
    <text evidence="1">Homodimer.</text>
</comment>
<comment type="subcellular location">
    <subcellularLocation>
        <location evidence="1">Cytoplasm</location>
    </subcellularLocation>
</comment>
<comment type="similarity">
    <text evidence="1">Belongs to the GrpE family.</text>
</comment>
<accession>Q9HV42</accession>
<name>GRPE_PSEAE</name>
<organism>
    <name type="scientific">Pseudomonas aeruginosa (strain ATCC 15692 / DSM 22644 / CIP 104116 / JCM 14847 / LMG 12228 / 1C / PRS 101 / PAO1)</name>
    <dbReference type="NCBI Taxonomy" id="208964"/>
    <lineage>
        <taxon>Bacteria</taxon>
        <taxon>Pseudomonadati</taxon>
        <taxon>Pseudomonadota</taxon>
        <taxon>Gammaproteobacteria</taxon>
        <taxon>Pseudomonadales</taxon>
        <taxon>Pseudomonadaceae</taxon>
        <taxon>Pseudomonas</taxon>
    </lineage>
</organism>
<reference key="1">
    <citation type="journal article" date="2000" name="Nature">
        <title>Complete genome sequence of Pseudomonas aeruginosa PAO1, an opportunistic pathogen.</title>
        <authorList>
            <person name="Stover C.K."/>
            <person name="Pham X.-Q.T."/>
            <person name="Erwin A.L."/>
            <person name="Mizoguchi S.D."/>
            <person name="Warrener P."/>
            <person name="Hickey M.J."/>
            <person name="Brinkman F.S.L."/>
            <person name="Hufnagle W.O."/>
            <person name="Kowalik D.J."/>
            <person name="Lagrou M."/>
            <person name="Garber R.L."/>
            <person name="Goltry L."/>
            <person name="Tolentino E."/>
            <person name="Westbrock-Wadman S."/>
            <person name="Yuan Y."/>
            <person name="Brody L.L."/>
            <person name="Coulter S.N."/>
            <person name="Folger K.R."/>
            <person name="Kas A."/>
            <person name="Larbig K."/>
            <person name="Lim R.M."/>
            <person name="Smith K.A."/>
            <person name="Spencer D.H."/>
            <person name="Wong G.K.-S."/>
            <person name="Wu Z."/>
            <person name="Paulsen I.T."/>
            <person name="Reizer J."/>
            <person name="Saier M.H. Jr."/>
            <person name="Hancock R.E.W."/>
            <person name="Lory S."/>
            <person name="Olson M.V."/>
        </authorList>
    </citation>
    <scope>NUCLEOTIDE SEQUENCE [LARGE SCALE GENOMIC DNA]</scope>
    <source>
        <strain>ATCC 15692 / DSM 22644 / CIP 104116 / JCM 14847 / LMG 12228 / 1C / PRS 101 / PAO1</strain>
    </source>
</reference>
<dbReference type="EMBL" id="AE004091">
    <property type="protein sequence ID" value="AAG08148.1"/>
    <property type="molecule type" value="Genomic_DNA"/>
</dbReference>
<dbReference type="PIR" id="F83049">
    <property type="entry name" value="F83049"/>
</dbReference>
<dbReference type="RefSeq" id="NP_253450.1">
    <property type="nucleotide sequence ID" value="NC_002516.2"/>
</dbReference>
<dbReference type="RefSeq" id="WP_003095213.1">
    <property type="nucleotide sequence ID" value="NZ_QZGE01000018.1"/>
</dbReference>
<dbReference type="SMR" id="Q9HV42"/>
<dbReference type="FunCoup" id="Q9HV42">
    <property type="interactions" value="645"/>
</dbReference>
<dbReference type="STRING" id="208964.PA4762"/>
<dbReference type="PaxDb" id="208964-PA4762"/>
<dbReference type="DNASU" id="881766"/>
<dbReference type="GeneID" id="881766"/>
<dbReference type="KEGG" id="pae:PA4762"/>
<dbReference type="PATRIC" id="fig|208964.12.peg.4988"/>
<dbReference type="PseudoCAP" id="PA4762"/>
<dbReference type="HOGENOM" id="CLU_057217_6_0_6"/>
<dbReference type="InParanoid" id="Q9HV42"/>
<dbReference type="OrthoDB" id="9789811at2"/>
<dbReference type="PhylomeDB" id="Q9HV42"/>
<dbReference type="BioCyc" id="PAER208964:G1FZ6-4875-MONOMER"/>
<dbReference type="Proteomes" id="UP000002438">
    <property type="component" value="Chromosome"/>
</dbReference>
<dbReference type="GO" id="GO:0005829">
    <property type="term" value="C:cytosol"/>
    <property type="evidence" value="ECO:0000318"/>
    <property type="project" value="GO_Central"/>
</dbReference>
<dbReference type="GO" id="GO:0000774">
    <property type="term" value="F:adenyl-nucleotide exchange factor activity"/>
    <property type="evidence" value="ECO:0000318"/>
    <property type="project" value="GO_Central"/>
</dbReference>
<dbReference type="GO" id="GO:0042803">
    <property type="term" value="F:protein homodimerization activity"/>
    <property type="evidence" value="ECO:0007669"/>
    <property type="project" value="InterPro"/>
</dbReference>
<dbReference type="GO" id="GO:0051087">
    <property type="term" value="F:protein-folding chaperone binding"/>
    <property type="evidence" value="ECO:0007669"/>
    <property type="project" value="InterPro"/>
</dbReference>
<dbReference type="GO" id="GO:0051082">
    <property type="term" value="F:unfolded protein binding"/>
    <property type="evidence" value="ECO:0000318"/>
    <property type="project" value="GO_Central"/>
</dbReference>
<dbReference type="GO" id="GO:0006457">
    <property type="term" value="P:protein folding"/>
    <property type="evidence" value="ECO:0007669"/>
    <property type="project" value="InterPro"/>
</dbReference>
<dbReference type="CDD" id="cd00446">
    <property type="entry name" value="GrpE"/>
    <property type="match status" value="1"/>
</dbReference>
<dbReference type="FunFam" id="2.30.22.10:FF:000001">
    <property type="entry name" value="Protein GrpE"/>
    <property type="match status" value="1"/>
</dbReference>
<dbReference type="FunFam" id="3.90.20.20:FF:000014">
    <property type="entry name" value="Protein GrpE"/>
    <property type="match status" value="1"/>
</dbReference>
<dbReference type="Gene3D" id="3.90.20.20">
    <property type="match status" value="1"/>
</dbReference>
<dbReference type="Gene3D" id="2.30.22.10">
    <property type="entry name" value="Head domain of nucleotide exchange factor GrpE"/>
    <property type="match status" value="1"/>
</dbReference>
<dbReference type="HAMAP" id="MF_01151">
    <property type="entry name" value="GrpE"/>
    <property type="match status" value="1"/>
</dbReference>
<dbReference type="InterPro" id="IPR000740">
    <property type="entry name" value="GrpE"/>
</dbReference>
<dbReference type="InterPro" id="IPR013805">
    <property type="entry name" value="GrpE_coiled_coil"/>
</dbReference>
<dbReference type="InterPro" id="IPR009012">
    <property type="entry name" value="GrpE_head"/>
</dbReference>
<dbReference type="NCBIfam" id="NF010737">
    <property type="entry name" value="PRK14139.1"/>
    <property type="match status" value="1"/>
</dbReference>
<dbReference type="NCBIfam" id="NF010738">
    <property type="entry name" value="PRK14140.1"/>
    <property type="match status" value="1"/>
</dbReference>
<dbReference type="NCBIfam" id="NF010748">
    <property type="entry name" value="PRK14150.1"/>
    <property type="match status" value="1"/>
</dbReference>
<dbReference type="NCBIfam" id="NF010749">
    <property type="entry name" value="PRK14151.1"/>
    <property type="match status" value="1"/>
</dbReference>
<dbReference type="PANTHER" id="PTHR21237">
    <property type="entry name" value="GRPE PROTEIN"/>
    <property type="match status" value="1"/>
</dbReference>
<dbReference type="PANTHER" id="PTHR21237:SF23">
    <property type="entry name" value="GRPE PROTEIN HOMOLOG, MITOCHONDRIAL"/>
    <property type="match status" value="1"/>
</dbReference>
<dbReference type="Pfam" id="PF01025">
    <property type="entry name" value="GrpE"/>
    <property type="match status" value="1"/>
</dbReference>
<dbReference type="PRINTS" id="PR00773">
    <property type="entry name" value="GRPEPROTEIN"/>
</dbReference>
<dbReference type="SUPFAM" id="SSF58014">
    <property type="entry name" value="Coiled-coil domain of nucleotide exchange factor GrpE"/>
    <property type="match status" value="1"/>
</dbReference>
<dbReference type="SUPFAM" id="SSF51064">
    <property type="entry name" value="Head domain of nucleotide exchange factor GrpE"/>
    <property type="match status" value="1"/>
</dbReference>
<dbReference type="PROSITE" id="PS01071">
    <property type="entry name" value="GRPE"/>
    <property type="match status" value="1"/>
</dbReference>